<keyword id="KW-0436">Ligase</keyword>
<keyword id="KW-0597">Phosphoprotein</keyword>
<keyword id="KW-0662">Pyridine nucleotide biosynthesis</keyword>
<comment type="function">
    <text evidence="1">Catalyzes the synthesis of beta-nicotinate D-ribonucleotide from nicotinate and 5-phospho-D-ribose 1-phosphate at the expense of ATP.</text>
</comment>
<comment type="catalytic activity">
    <reaction evidence="1">
        <text>nicotinate + 5-phospho-alpha-D-ribose 1-diphosphate + ATP + H2O = nicotinate beta-D-ribonucleotide + ADP + phosphate + diphosphate</text>
        <dbReference type="Rhea" id="RHEA:36163"/>
        <dbReference type="ChEBI" id="CHEBI:15377"/>
        <dbReference type="ChEBI" id="CHEBI:30616"/>
        <dbReference type="ChEBI" id="CHEBI:32544"/>
        <dbReference type="ChEBI" id="CHEBI:33019"/>
        <dbReference type="ChEBI" id="CHEBI:43474"/>
        <dbReference type="ChEBI" id="CHEBI:57502"/>
        <dbReference type="ChEBI" id="CHEBI:58017"/>
        <dbReference type="ChEBI" id="CHEBI:456216"/>
        <dbReference type="EC" id="6.3.4.21"/>
    </reaction>
</comment>
<comment type="pathway">
    <text evidence="1">Cofactor biosynthesis; NAD(+) biosynthesis; nicotinate D-ribonucleotide from nicotinate: step 1/1.</text>
</comment>
<comment type="PTM">
    <text evidence="1">Transiently phosphorylated on a His residue during the reaction cycle. Phosphorylation strongly increases the affinity for substrates and increases the rate of nicotinate D-ribonucleotide production. Dephosphorylation regenerates the low-affinity form of the enzyme, leading to product release.</text>
</comment>
<comment type="similarity">
    <text evidence="1">Belongs to the NAPRTase family.</text>
</comment>
<evidence type="ECO:0000255" key="1">
    <source>
        <dbReference type="HAMAP-Rule" id="MF_00570"/>
    </source>
</evidence>
<sequence length="400" mass="45924">MTQFASPVLHSLLDTDAYKLHMQQAVFHHYYDVHVAAEFRCRGDDLLGIYADAIREQVQAMQHLRLQDDEYQWLSALPFFKADYLNWLREFRFNPEQVTVSNDNGKLDIRLSGPWREVILWEVPLLAVISEMVHRYRSPQADVAQALDTLENKLVDFSALTAGLDMSRFHLMDFGTRRRFSREVQETIVKRLQQESWFVGTSNYDLARRLSLTPMGTQAHEWFQAHQQISPDLANSQRAALAAWLEEYPDQLGIALTDCITMDAFLRDFGVEFASRYQGLRHDSGDPVEWGEKAIAHYEKLGIDPQSKTLVFSDNLDLRKAVELYRHFSSRVQLSFGIGTRLTCDIPQVKPLNIVIKLVECNGKPVAKLSDSPGKTICHDKAFVRALRKAFDLPHIKKAS</sequence>
<gene>
    <name evidence="1" type="primary">pncB</name>
    <name type="ordered locus">ECED1_0961</name>
</gene>
<proteinExistence type="inferred from homology"/>
<name>PNCB_ECO81</name>
<protein>
    <recommendedName>
        <fullName evidence="1">Nicotinate phosphoribosyltransferase</fullName>
        <shortName evidence="1">NAPRTase</shortName>
        <ecNumber evidence="1">6.3.4.21</ecNumber>
    </recommendedName>
</protein>
<organism>
    <name type="scientific">Escherichia coli O81 (strain ED1a)</name>
    <dbReference type="NCBI Taxonomy" id="585397"/>
    <lineage>
        <taxon>Bacteria</taxon>
        <taxon>Pseudomonadati</taxon>
        <taxon>Pseudomonadota</taxon>
        <taxon>Gammaproteobacteria</taxon>
        <taxon>Enterobacterales</taxon>
        <taxon>Enterobacteriaceae</taxon>
        <taxon>Escherichia</taxon>
    </lineage>
</organism>
<reference key="1">
    <citation type="journal article" date="2009" name="PLoS Genet.">
        <title>Organised genome dynamics in the Escherichia coli species results in highly diverse adaptive paths.</title>
        <authorList>
            <person name="Touchon M."/>
            <person name="Hoede C."/>
            <person name="Tenaillon O."/>
            <person name="Barbe V."/>
            <person name="Baeriswyl S."/>
            <person name="Bidet P."/>
            <person name="Bingen E."/>
            <person name="Bonacorsi S."/>
            <person name="Bouchier C."/>
            <person name="Bouvet O."/>
            <person name="Calteau A."/>
            <person name="Chiapello H."/>
            <person name="Clermont O."/>
            <person name="Cruveiller S."/>
            <person name="Danchin A."/>
            <person name="Diard M."/>
            <person name="Dossat C."/>
            <person name="Karoui M.E."/>
            <person name="Frapy E."/>
            <person name="Garry L."/>
            <person name="Ghigo J.M."/>
            <person name="Gilles A.M."/>
            <person name="Johnson J."/>
            <person name="Le Bouguenec C."/>
            <person name="Lescat M."/>
            <person name="Mangenot S."/>
            <person name="Martinez-Jehanne V."/>
            <person name="Matic I."/>
            <person name="Nassif X."/>
            <person name="Oztas S."/>
            <person name="Petit M.A."/>
            <person name="Pichon C."/>
            <person name="Rouy Z."/>
            <person name="Ruf C.S."/>
            <person name="Schneider D."/>
            <person name="Tourret J."/>
            <person name="Vacherie B."/>
            <person name="Vallenet D."/>
            <person name="Medigue C."/>
            <person name="Rocha E.P.C."/>
            <person name="Denamur E."/>
        </authorList>
    </citation>
    <scope>NUCLEOTIDE SEQUENCE [LARGE SCALE GENOMIC DNA]</scope>
    <source>
        <strain>ED1a</strain>
    </source>
</reference>
<feature type="chain" id="PRO_1000146842" description="Nicotinate phosphoribosyltransferase">
    <location>
        <begin position="1"/>
        <end position="400"/>
    </location>
</feature>
<feature type="modified residue" description="Phosphohistidine; by autocatalysis" evidence="1">
    <location>
        <position position="220"/>
    </location>
</feature>
<accession>B7MS49</accession>
<dbReference type="EC" id="6.3.4.21" evidence="1"/>
<dbReference type="EMBL" id="CU928162">
    <property type="protein sequence ID" value="CAR07163.1"/>
    <property type="molecule type" value="Genomic_DNA"/>
</dbReference>
<dbReference type="RefSeq" id="WP_001298298.1">
    <property type="nucleotide sequence ID" value="NC_011745.1"/>
</dbReference>
<dbReference type="SMR" id="B7MS49"/>
<dbReference type="KEGG" id="ecq:ECED1_0961"/>
<dbReference type="HOGENOM" id="CLU_030991_1_0_6"/>
<dbReference type="UniPathway" id="UPA00253">
    <property type="reaction ID" value="UER00457"/>
</dbReference>
<dbReference type="Proteomes" id="UP000000748">
    <property type="component" value="Chromosome"/>
</dbReference>
<dbReference type="GO" id="GO:0005829">
    <property type="term" value="C:cytosol"/>
    <property type="evidence" value="ECO:0007669"/>
    <property type="project" value="TreeGrafter"/>
</dbReference>
<dbReference type="GO" id="GO:0004516">
    <property type="term" value="F:nicotinate phosphoribosyltransferase activity"/>
    <property type="evidence" value="ECO:0007669"/>
    <property type="project" value="UniProtKB-UniRule"/>
</dbReference>
<dbReference type="GO" id="GO:0034355">
    <property type="term" value="P:NAD biosynthetic process via the salvage pathway"/>
    <property type="evidence" value="ECO:0007669"/>
    <property type="project" value="TreeGrafter"/>
</dbReference>
<dbReference type="CDD" id="cd01401">
    <property type="entry name" value="PncB_like"/>
    <property type="match status" value="1"/>
</dbReference>
<dbReference type="FunFam" id="3.20.140.10:FF:000001">
    <property type="entry name" value="Nicotinate phosphoribosyltransferase"/>
    <property type="match status" value="1"/>
</dbReference>
<dbReference type="Gene3D" id="3.20.140.10">
    <property type="entry name" value="nicotinate phosphoribosyltransferase"/>
    <property type="match status" value="1"/>
</dbReference>
<dbReference type="HAMAP" id="MF_00570">
    <property type="entry name" value="NAPRTase"/>
    <property type="match status" value="1"/>
</dbReference>
<dbReference type="InterPro" id="IPR041525">
    <property type="entry name" value="N/Namide_PRibTrfase"/>
</dbReference>
<dbReference type="InterPro" id="IPR040727">
    <property type="entry name" value="NAPRTase_N"/>
</dbReference>
<dbReference type="InterPro" id="IPR006406">
    <property type="entry name" value="Nic_PRibTrfase"/>
</dbReference>
<dbReference type="InterPro" id="IPR007229">
    <property type="entry name" value="Nic_PRibTrfase-Fam"/>
</dbReference>
<dbReference type="InterPro" id="IPR036068">
    <property type="entry name" value="Nicotinate_pribotase-like_C"/>
</dbReference>
<dbReference type="NCBIfam" id="TIGR01514">
    <property type="entry name" value="NAPRTase"/>
    <property type="match status" value="1"/>
</dbReference>
<dbReference type="NCBIfam" id="NF003704">
    <property type="entry name" value="PRK05321.1"/>
    <property type="match status" value="1"/>
</dbReference>
<dbReference type="PANTHER" id="PTHR11098">
    <property type="entry name" value="NICOTINATE PHOSPHORIBOSYLTRANSFERASE"/>
    <property type="match status" value="1"/>
</dbReference>
<dbReference type="PANTHER" id="PTHR11098:SF1">
    <property type="entry name" value="NICOTINATE PHOSPHORIBOSYLTRANSFERASE"/>
    <property type="match status" value="1"/>
</dbReference>
<dbReference type="Pfam" id="PF04095">
    <property type="entry name" value="NAPRTase"/>
    <property type="match status" value="1"/>
</dbReference>
<dbReference type="Pfam" id="PF17767">
    <property type="entry name" value="NAPRTase_N"/>
    <property type="match status" value="1"/>
</dbReference>
<dbReference type="PIRSF" id="PIRSF000484">
    <property type="entry name" value="NAPRT"/>
    <property type="match status" value="1"/>
</dbReference>
<dbReference type="SUPFAM" id="SSF51690">
    <property type="entry name" value="Nicotinate/Quinolinate PRTase C-terminal domain-like"/>
    <property type="match status" value="1"/>
</dbReference>
<dbReference type="SUPFAM" id="SSF54675">
    <property type="entry name" value="Nicotinate/Quinolinate PRTase N-terminal domain-like"/>
    <property type="match status" value="1"/>
</dbReference>